<accession>Q9LFW3</accession>
<accession>Q6ICX3</accession>
<reference key="1">
    <citation type="journal article" date="2000" name="Nature">
        <title>Sequence and analysis of chromosome 5 of the plant Arabidopsis thaliana.</title>
        <authorList>
            <person name="Tabata S."/>
            <person name="Kaneko T."/>
            <person name="Nakamura Y."/>
            <person name="Kotani H."/>
            <person name="Kato T."/>
            <person name="Asamizu E."/>
            <person name="Miyajima N."/>
            <person name="Sasamoto S."/>
            <person name="Kimura T."/>
            <person name="Hosouchi T."/>
            <person name="Kawashima K."/>
            <person name="Kohara M."/>
            <person name="Matsumoto M."/>
            <person name="Matsuno A."/>
            <person name="Muraki A."/>
            <person name="Nakayama S."/>
            <person name="Nakazaki N."/>
            <person name="Naruo K."/>
            <person name="Okumura S."/>
            <person name="Shinpo S."/>
            <person name="Takeuchi C."/>
            <person name="Wada T."/>
            <person name="Watanabe A."/>
            <person name="Yamada M."/>
            <person name="Yasuda M."/>
            <person name="Sato S."/>
            <person name="de la Bastide M."/>
            <person name="Huang E."/>
            <person name="Spiegel L."/>
            <person name="Gnoj L."/>
            <person name="O'Shaughnessy A."/>
            <person name="Preston R."/>
            <person name="Habermann K."/>
            <person name="Murray J."/>
            <person name="Johnson D."/>
            <person name="Rohlfing T."/>
            <person name="Nelson J."/>
            <person name="Stoneking T."/>
            <person name="Pepin K."/>
            <person name="Spieth J."/>
            <person name="Sekhon M."/>
            <person name="Armstrong J."/>
            <person name="Becker M."/>
            <person name="Belter E."/>
            <person name="Cordum H."/>
            <person name="Cordes M."/>
            <person name="Courtney L."/>
            <person name="Courtney W."/>
            <person name="Dante M."/>
            <person name="Du H."/>
            <person name="Edwards J."/>
            <person name="Fryman J."/>
            <person name="Haakensen B."/>
            <person name="Lamar E."/>
            <person name="Latreille P."/>
            <person name="Leonard S."/>
            <person name="Meyer R."/>
            <person name="Mulvaney E."/>
            <person name="Ozersky P."/>
            <person name="Riley A."/>
            <person name="Strowmatt C."/>
            <person name="Wagner-McPherson C."/>
            <person name="Wollam A."/>
            <person name="Yoakum M."/>
            <person name="Bell M."/>
            <person name="Dedhia N."/>
            <person name="Parnell L."/>
            <person name="Shah R."/>
            <person name="Rodriguez M."/>
            <person name="Hoon See L."/>
            <person name="Vil D."/>
            <person name="Baker J."/>
            <person name="Kirchoff K."/>
            <person name="Toth K."/>
            <person name="King L."/>
            <person name="Bahret A."/>
            <person name="Miller B."/>
            <person name="Marra M.A."/>
            <person name="Martienssen R."/>
            <person name="McCombie W.R."/>
            <person name="Wilson R.K."/>
            <person name="Murphy G."/>
            <person name="Bancroft I."/>
            <person name="Volckaert G."/>
            <person name="Wambutt R."/>
            <person name="Duesterhoeft A."/>
            <person name="Stiekema W."/>
            <person name="Pohl T."/>
            <person name="Entian K.-D."/>
            <person name="Terryn N."/>
            <person name="Hartley N."/>
            <person name="Bent E."/>
            <person name="Johnson S."/>
            <person name="Langham S.-A."/>
            <person name="McCullagh B."/>
            <person name="Robben J."/>
            <person name="Grymonprez B."/>
            <person name="Zimmermann W."/>
            <person name="Ramsperger U."/>
            <person name="Wedler H."/>
            <person name="Balke K."/>
            <person name="Wedler E."/>
            <person name="Peters S."/>
            <person name="van Staveren M."/>
            <person name="Dirkse W."/>
            <person name="Mooijman P."/>
            <person name="Klein Lankhorst R."/>
            <person name="Weitzenegger T."/>
            <person name="Bothe G."/>
            <person name="Rose M."/>
            <person name="Hauf J."/>
            <person name="Berneiser S."/>
            <person name="Hempel S."/>
            <person name="Feldpausch M."/>
            <person name="Lamberth S."/>
            <person name="Villarroel R."/>
            <person name="Gielen J."/>
            <person name="Ardiles W."/>
            <person name="Bents O."/>
            <person name="Lemcke K."/>
            <person name="Kolesov G."/>
            <person name="Mayer K.F.X."/>
            <person name="Rudd S."/>
            <person name="Schoof H."/>
            <person name="Schueller C."/>
            <person name="Zaccaria P."/>
            <person name="Mewes H.-W."/>
            <person name="Bevan M."/>
            <person name="Fransz P.F."/>
        </authorList>
    </citation>
    <scope>NUCLEOTIDE SEQUENCE [LARGE SCALE GENOMIC DNA]</scope>
    <source>
        <strain>cv. Columbia</strain>
    </source>
</reference>
<reference key="2">
    <citation type="journal article" date="2017" name="Plant J.">
        <title>Araport11: a complete reannotation of the Arabidopsis thaliana reference genome.</title>
        <authorList>
            <person name="Cheng C.Y."/>
            <person name="Krishnakumar V."/>
            <person name="Chan A.P."/>
            <person name="Thibaud-Nissen F."/>
            <person name="Schobel S."/>
            <person name="Town C.D."/>
        </authorList>
    </citation>
    <scope>GENOME REANNOTATION</scope>
    <source>
        <strain>cv. Columbia</strain>
    </source>
</reference>
<reference key="3">
    <citation type="submission" date="2004-12" db="EMBL/GenBank/DDBJ databases">
        <title>Arabidopsis ORF clones.</title>
        <authorList>
            <person name="Shinn P."/>
            <person name="Chen H."/>
            <person name="Cheuk R.F."/>
            <person name="Kim C.J."/>
            <person name="Ecker J.R."/>
        </authorList>
    </citation>
    <scope>NUCLEOTIDE SEQUENCE [LARGE SCALE MRNA]</scope>
    <source>
        <strain>cv. Columbia</strain>
    </source>
</reference>
<reference key="4">
    <citation type="journal article" date="2002" name="Plant Physiol.">
        <title>The COBRA family of putative GPI-anchored proteins in Arabidopsis. A new fellowship in expansion.</title>
        <authorList>
            <person name="Roudier F."/>
            <person name="Schindelman G."/>
            <person name="DeSalle R."/>
            <person name="Benfey P.N."/>
        </authorList>
    </citation>
    <scope>TISSUE SPECIFICITY</scope>
</reference>
<name>COBL4_ARATH</name>
<evidence type="ECO:0000255" key="1"/>
<evidence type="ECO:0000269" key="2">
    <source>
    </source>
</evidence>
<evidence type="ECO:0000305" key="3"/>
<keyword id="KW-1003">Cell membrane</keyword>
<keyword id="KW-0325">Glycoprotein</keyword>
<keyword id="KW-0336">GPI-anchor</keyword>
<keyword id="KW-0449">Lipoprotein</keyword>
<keyword id="KW-0472">Membrane</keyword>
<keyword id="KW-1185">Reference proteome</keyword>
<keyword id="KW-0732">Signal</keyword>
<comment type="subcellular location">
    <subcellularLocation>
        <location evidence="3">Cell membrane</location>
        <topology evidence="3">Lipid-anchor</topology>
        <topology evidence="3">GPI-anchor</topology>
    </subcellularLocation>
</comment>
<comment type="tissue specificity">
    <text evidence="2">Expressed in roots, stems, leaves, flowers and siliques.</text>
</comment>
<comment type="similarity">
    <text evidence="3">Belongs to the COBRA family.</text>
</comment>
<comment type="sequence caution" evidence="3">
    <conflict type="erroneous gene model prediction">
        <sequence resource="EMBL-CDS" id="CAC01762"/>
    </conflict>
</comment>
<gene>
    <name type="primary">COBL4</name>
    <name type="ordered locus">At5g15630</name>
    <name type="ORF">F14F8_10</name>
</gene>
<protein>
    <recommendedName>
        <fullName>COBRA-like protein 4</fullName>
    </recommendedName>
</protein>
<sequence length="431" mass="48515">MRLLFSFCFFFFMIIFTATAYDPLDPSGNITIKWDIMSWTADGYVATVTMNNFQIYRHIQNPGWTLGWTWAKKEVIWSMVGAQTTEQGDCSKFKGNVPHCCKKTPTVVDLLPGVPYNQQFSNCCKGGVIGAWGQDPSAAVSQFQVSAGLAGTTNKTVKLPKNFTLLGPGPGYTCGPAKIVPSTVFLTTDKRRKTQALMTWNVTCTYSQFLARKHPSCCVSFSSFYNDTITPCPSCACGCENKKSCVKADSKILTKKGLNTPKKDNTPLLQCTHHMCPVRVHWHVKTNYKDYWRVKIAITNFNYRMNHTLWTLAIQHPNLNNVTQVFSFDYKPVSPYGSINDTGMFYGTKFYNDLLMEAGPSGNVQSEVLLQKDQKTFTFKQGWAFPRKVYFNGDECMLPPPDSYPFLPNSAQGNFASFSLTILLLLFISIW</sequence>
<dbReference type="EMBL" id="AL391144">
    <property type="protein sequence ID" value="CAC01762.1"/>
    <property type="status" value="ALT_SEQ"/>
    <property type="molecule type" value="Genomic_DNA"/>
</dbReference>
<dbReference type="EMBL" id="CP002688">
    <property type="protein sequence ID" value="AED92186.1"/>
    <property type="molecule type" value="Genomic_DNA"/>
</dbReference>
<dbReference type="EMBL" id="BT014900">
    <property type="protein sequence ID" value="AAT44976.1"/>
    <property type="molecule type" value="mRNA"/>
</dbReference>
<dbReference type="EMBL" id="BT020445">
    <property type="protein sequence ID" value="AAW30024.1"/>
    <property type="molecule type" value="mRNA"/>
</dbReference>
<dbReference type="PIR" id="T51392">
    <property type="entry name" value="T51392"/>
</dbReference>
<dbReference type="RefSeq" id="NP_001331538.1">
    <property type="nucleotide sequence ID" value="NM_001343412.1"/>
</dbReference>
<dbReference type="RefSeq" id="NP_197067.2">
    <property type="nucleotide sequence ID" value="NM_121567.5"/>
</dbReference>
<dbReference type="FunCoup" id="Q9LFW3">
    <property type="interactions" value="719"/>
</dbReference>
<dbReference type="STRING" id="3702.Q9LFW3"/>
<dbReference type="GlyCosmos" id="Q9LFW3">
    <property type="glycosylation" value="8 sites, No reported glycans"/>
</dbReference>
<dbReference type="GlyGen" id="Q9LFW3">
    <property type="glycosylation" value="8 sites"/>
</dbReference>
<dbReference type="PaxDb" id="3702-AT5G15630.1"/>
<dbReference type="EnsemblPlants" id="AT5G15630.1">
    <property type="protein sequence ID" value="AT5G15630.1"/>
    <property type="gene ID" value="AT5G15630"/>
</dbReference>
<dbReference type="GeneID" id="831417"/>
<dbReference type="Gramene" id="AT5G15630.1">
    <property type="protein sequence ID" value="AT5G15630.1"/>
    <property type="gene ID" value="AT5G15630"/>
</dbReference>
<dbReference type="KEGG" id="ath:AT5G15630"/>
<dbReference type="Araport" id="AT5G15630"/>
<dbReference type="TAIR" id="AT5G15630">
    <property type="gene designation" value="IRX6"/>
</dbReference>
<dbReference type="eggNOG" id="ENOG502QQYT">
    <property type="taxonomic scope" value="Eukaryota"/>
</dbReference>
<dbReference type="HOGENOM" id="CLU_038120_0_0_1"/>
<dbReference type="InParanoid" id="Q9LFW3"/>
<dbReference type="OMA" id="CDAHKPC"/>
<dbReference type="OrthoDB" id="2012261at2759"/>
<dbReference type="PhylomeDB" id="Q9LFW3"/>
<dbReference type="PRO" id="PR:Q9LFW3"/>
<dbReference type="Proteomes" id="UP000006548">
    <property type="component" value="Chromosome 5"/>
</dbReference>
<dbReference type="ExpressionAtlas" id="Q9LFW3">
    <property type="expression patterns" value="baseline and differential"/>
</dbReference>
<dbReference type="GO" id="GO:0000325">
    <property type="term" value="C:plant-type vacuole"/>
    <property type="evidence" value="ECO:0007005"/>
    <property type="project" value="TAIR"/>
</dbReference>
<dbReference type="GO" id="GO:0005886">
    <property type="term" value="C:plasma membrane"/>
    <property type="evidence" value="ECO:0000314"/>
    <property type="project" value="TAIR"/>
</dbReference>
<dbReference type="GO" id="GO:0098552">
    <property type="term" value="C:side of membrane"/>
    <property type="evidence" value="ECO:0007669"/>
    <property type="project" value="UniProtKB-KW"/>
</dbReference>
<dbReference type="GO" id="GO:0010215">
    <property type="term" value="P:cellulose microfibril organization"/>
    <property type="evidence" value="ECO:0007669"/>
    <property type="project" value="InterPro"/>
</dbReference>
<dbReference type="GO" id="GO:0009834">
    <property type="term" value="P:plant-type secondary cell wall biogenesis"/>
    <property type="evidence" value="ECO:0000315"/>
    <property type="project" value="TAIR"/>
</dbReference>
<dbReference type="InterPro" id="IPR056900">
    <property type="entry name" value="COB_C"/>
</dbReference>
<dbReference type="InterPro" id="IPR006918">
    <property type="entry name" value="COBRA_pln"/>
</dbReference>
<dbReference type="PANTHER" id="PTHR31673:SF23">
    <property type="entry name" value="COBRA-LIKE PROTEIN 4"/>
    <property type="match status" value="1"/>
</dbReference>
<dbReference type="PANTHER" id="PTHR31673">
    <property type="entry name" value="PROTEIN COBRA"/>
    <property type="match status" value="1"/>
</dbReference>
<dbReference type="Pfam" id="PF25079">
    <property type="entry name" value="COB_C"/>
    <property type="match status" value="1"/>
</dbReference>
<dbReference type="Pfam" id="PF04833">
    <property type="entry name" value="COBRA"/>
    <property type="match status" value="1"/>
</dbReference>
<dbReference type="PIRSF" id="PIRSF038122">
    <property type="entry name" value="COBRA"/>
    <property type="match status" value="1"/>
</dbReference>
<feature type="signal peptide" evidence="1">
    <location>
        <begin position="1"/>
        <end position="20"/>
    </location>
</feature>
<feature type="chain" id="PRO_0000005576" description="COBRA-like protein 4">
    <location>
        <begin position="21"/>
        <end position="414"/>
    </location>
</feature>
<feature type="propeptide" id="PRO_0000005577" description="Removed in mature form" evidence="1">
    <location>
        <begin position="415"/>
        <end position="431"/>
    </location>
</feature>
<feature type="lipid moiety-binding region" description="GPI-anchor amidated asparagine" evidence="1">
    <location>
        <position position="414"/>
    </location>
</feature>
<feature type="glycosylation site" description="N-linked (GlcNAc...) asparagine" evidence="1">
    <location>
        <position position="29"/>
    </location>
</feature>
<feature type="glycosylation site" description="N-linked (GlcNAc...) asparagine" evidence="1">
    <location>
        <position position="154"/>
    </location>
</feature>
<feature type="glycosylation site" description="N-linked (GlcNAc...) asparagine" evidence="1">
    <location>
        <position position="162"/>
    </location>
</feature>
<feature type="glycosylation site" description="N-linked (GlcNAc...) asparagine" evidence="1">
    <location>
        <position position="201"/>
    </location>
</feature>
<feature type="glycosylation site" description="N-linked (GlcNAc...) asparagine" evidence="1">
    <location>
        <position position="226"/>
    </location>
</feature>
<feature type="glycosylation site" description="N-linked (GlcNAc...) asparagine" evidence="1">
    <location>
        <position position="306"/>
    </location>
</feature>
<feature type="glycosylation site" description="N-linked (GlcNAc...) asparagine" evidence="1">
    <location>
        <position position="321"/>
    </location>
</feature>
<feature type="glycosylation site" description="N-linked (GlcNAc...) asparagine" evidence="1">
    <location>
        <position position="340"/>
    </location>
</feature>
<organism>
    <name type="scientific">Arabidopsis thaliana</name>
    <name type="common">Mouse-ear cress</name>
    <dbReference type="NCBI Taxonomy" id="3702"/>
    <lineage>
        <taxon>Eukaryota</taxon>
        <taxon>Viridiplantae</taxon>
        <taxon>Streptophyta</taxon>
        <taxon>Embryophyta</taxon>
        <taxon>Tracheophyta</taxon>
        <taxon>Spermatophyta</taxon>
        <taxon>Magnoliopsida</taxon>
        <taxon>eudicotyledons</taxon>
        <taxon>Gunneridae</taxon>
        <taxon>Pentapetalae</taxon>
        <taxon>rosids</taxon>
        <taxon>malvids</taxon>
        <taxon>Brassicales</taxon>
        <taxon>Brassicaceae</taxon>
        <taxon>Camelineae</taxon>
        <taxon>Arabidopsis</taxon>
    </lineage>
</organism>
<proteinExistence type="evidence at transcript level"/>